<protein>
    <recommendedName>
        <fullName evidence="1">Chaperone protein DnaJ</fullName>
    </recommendedName>
</protein>
<name>DNAJ_STUST</name>
<comment type="function">
    <text evidence="1">Participates actively in the response to hyperosmotic and heat shock by preventing the aggregation of stress-denatured proteins and by disaggregating proteins, also in an autonomous, DnaK-independent fashion. Unfolded proteins bind initially to DnaJ; upon interaction with the DnaJ-bound protein, DnaK hydrolyzes its bound ATP, resulting in the formation of a stable complex. GrpE releases ADP from DnaK; ATP binding to DnaK triggers the release of the substrate protein, thus completing the reaction cycle. Several rounds of ATP-dependent interactions between DnaJ, DnaK and GrpE are required for fully efficient folding. Also involved, together with DnaK and GrpE, in the DNA replication of plasmids through activation of initiation proteins.</text>
</comment>
<comment type="cofactor">
    <cofactor evidence="1">
        <name>Zn(2+)</name>
        <dbReference type="ChEBI" id="CHEBI:29105"/>
    </cofactor>
    <text evidence="1">Binds 2 Zn(2+) ions per monomer.</text>
</comment>
<comment type="subunit">
    <text evidence="1">Homodimer.</text>
</comment>
<comment type="subcellular location">
    <subcellularLocation>
        <location evidence="1">Cytoplasm</location>
    </subcellularLocation>
</comment>
<comment type="domain">
    <text evidence="1">The J domain is necessary and sufficient to stimulate DnaK ATPase activity. Zinc center 1 plays an important role in the autonomous, DnaK-independent chaperone activity of DnaJ. Zinc center 2 is essential for interaction with DnaK and for DnaJ activity.</text>
</comment>
<comment type="similarity">
    <text evidence="1">Belongs to the DnaJ family.</text>
</comment>
<proteinExistence type="inferred from homology"/>
<organism>
    <name type="scientific">Stutzerimonas stutzeri</name>
    <name type="common">Pseudomonas stutzeri</name>
    <dbReference type="NCBI Taxonomy" id="316"/>
    <lineage>
        <taxon>Bacteria</taxon>
        <taxon>Pseudomonadati</taxon>
        <taxon>Pseudomonadota</taxon>
        <taxon>Gammaproteobacteria</taxon>
        <taxon>Pseudomonadales</taxon>
        <taxon>Pseudomonadaceae</taxon>
        <taxon>Stutzerimonas</taxon>
    </lineage>
</organism>
<keyword id="KW-0143">Chaperone</keyword>
<keyword id="KW-0963">Cytoplasm</keyword>
<keyword id="KW-0235">DNA replication</keyword>
<keyword id="KW-0479">Metal-binding</keyword>
<keyword id="KW-0677">Repeat</keyword>
<keyword id="KW-0346">Stress response</keyword>
<keyword id="KW-0862">Zinc</keyword>
<keyword id="KW-0863">Zinc-finger</keyword>
<evidence type="ECO:0000255" key="1">
    <source>
        <dbReference type="HAMAP-Rule" id="MF_01152"/>
    </source>
</evidence>
<accession>Q6VAY5</accession>
<sequence length="376" mass="40132">MAKRDFYEVLGVERGASEAELKKAYRRLAMKHHPDRNPGDKAAEEAFKEANEAYEVLSDPSKRAAYDQYGHAGVDPQMGAGAGGAGYGGANFSDIFGDVFSDFFSGGRGGSRGGAQRGSDLRYTLELDLEEAVRGTTVTIRVPTLVECKTCDGSGAKKGTSPVTCTTCGGIGQVRMQQGFFSVQQTCPRCHGSGKMISDPCGSCHGQGRVEEQKTLSVKVPPGVDTGDRIRLSGEGEAGTQGGPAGDLYVVVNVREHAIFQRDGKHLYCEVPISFADAALGGELEVPTLDGRVKLKIPEGTQTGKQFRLRGKGVAPVRGGAAGDLMCRVVVETPVNLSKRQREMLEEFRGTLQGDTSHSPKASGWFEGVKRFFGDV</sequence>
<gene>
    <name evidence="1" type="primary">dnaJ</name>
</gene>
<reference key="1">
    <citation type="journal article" date="2003" name="Appl. Environ. Microbiol.">
        <title>Development and application of a dapB-based in vivo expression technology system to study colonization of rice by the endophytic nitrogen-fixing bacterium Pseudomonas stutzeri A15.</title>
        <authorList>
            <person name="Rediers H."/>
            <person name="Bonnecarrere V."/>
            <person name="Rainey P.B."/>
            <person name="Hamonts K."/>
            <person name="Vanderleyden J."/>
            <person name="De Mot R."/>
        </authorList>
    </citation>
    <scope>NUCLEOTIDE SEQUENCE [GENOMIC DNA]</scope>
    <source>
        <strain>A15</strain>
    </source>
</reference>
<feature type="chain" id="PRO_0000070861" description="Chaperone protein DnaJ">
    <location>
        <begin position="1"/>
        <end position="376"/>
    </location>
</feature>
<feature type="domain" description="J" evidence="1">
    <location>
        <begin position="5"/>
        <end position="70"/>
    </location>
</feature>
<feature type="repeat" description="CXXCXGXG motif">
    <location>
        <begin position="148"/>
        <end position="155"/>
    </location>
</feature>
<feature type="repeat" description="CXXCXGXG motif">
    <location>
        <begin position="165"/>
        <end position="172"/>
    </location>
</feature>
<feature type="repeat" description="CXXCXGXG motif">
    <location>
        <begin position="187"/>
        <end position="194"/>
    </location>
</feature>
<feature type="repeat" description="CXXCXGXG motif">
    <location>
        <begin position="201"/>
        <end position="208"/>
    </location>
</feature>
<feature type="zinc finger region" description="CR-type" evidence="1">
    <location>
        <begin position="135"/>
        <end position="213"/>
    </location>
</feature>
<feature type="binding site" evidence="1">
    <location>
        <position position="148"/>
    </location>
    <ligand>
        <name>Zn(2+)</name>
        <dbReference type="ChEBI" id="CHEBI:29105"/>
        <label>1</label>
    </ligand>
</feature>
<feature type="binding site" evidence="1">
    <location>
        <position position="151"/>
    </location>
    <ligand>
        <name>Zn(2+)</name>
        <dbReference type="ChEBI" id="CHEBI:29105"/>
        <label>1</label>
    </ligand>
</feature>
<feature type="binding site" evidence="1">
    <location>
        <position position="165"/>
    </location>
    <ligand>
        <name>Zn(2+)</name>
        <dbReference type="ChEBI" id="CHEBI:29105"/>
        <label>2</label>
    </ligand>
</feature>
<feature type="binding site" evidence="1">
    <location>
        <position position="168"/>
    </location>
    <ligand>
        <name>Zn(2+)</name>
        <dbReference type="ChEBI" id="CHEBI:29105"/>
        <label>2</label>
    </ligand>
</feature>
<feature type="binding site" evidence="1">
    <location>
        <position position="187"/>
    </location>
    <ligand>
        <name>Zn(2+)</name>
        <dbReference type="ChEBI" id="CHEBI:29105"/>
        <label>2</label>
    </ligand>
</feature>
<feature type="binding site" evidence="1">
    <location>
        <position position="190"/>
    </location>
    <ligand>
        <name>Zn(2+)</name>
        <dbReference type="ChEBI" id="CHEBI:29105"/>
        <label>2</label>
    </ligand>
</feature>
<feature type="binding site" evidence="1">
    <location>
        <position position="201"/>
    </location>
    <ligand>
        <name>Zn(2+)</name>
        <dbReference type="ChEBI" id="CHEBI:29105"/>
        <label>1</label>
    </ligand>
</feature>
<feature type="binding site" evidence="1">
    <location>
        <position position="204"/>
    </location>
    <ligand>
        <name>Zn(2+)</name>
        <dbReference type="ChEBI" id="CHEBI:29105"/>
        <label>1</label>
    </ligand>
</feature>
<dbReference type="EMBL" id="AY344804">
    <property type="protein sequence ID" value="AAQ22347.1"/>
    <property type="molecule type" value="Genomic_DNA"/>
</dbReference>
<dbReference type="RefSeq" id="WP_013983884.1">
    <property type="nucleotide sequence ID" value="NZ_WWNS01000001.1"/>
</dbReference>
<dbReference type="SMR" id="Q6VAY5"/>
<dbReference type="GeneID" id="66822723"/>
<dbReference type="eggNOG" id="COG0484">
    <property type="taxonomic scope" value="Bacteria"/>
</dbReference>
<dbReference type="GO" id="GO:0005737">
    <property type="term" value="C:cytoplasm"/>
    <property type="evidence" value="ECO:0007669"/>
    <property type="project" value="UniProtKB-SubCell"/>
</dbReference>
<dbReference type="GO" id="GO:0005524">
    <property type="term" value="F:ATP binding"/>
    <property type="evidence" value="ECO:0007669"/>
    <property type="project" value="InterPro"/>
</dbReference>
<dbReference type="GO" id="GO:0031072">
    <property type="term" value="F:heat shock protein binding"/>
    <property type="evidence" value="ECO:0007669"/>
    <property type="project" value="InterPro"/>
</dbReference>
<dbReference type="GO" id="GO:0051082">
    <property type="term" value="F:unfolded protein binding"/>
    <property type="evidence" value="ECO:0007669"/>
    <property type="project" value="UniProtKB-UniRule"/>
</dbReference>
<dbReference type="GO" id="GO:0008270">
    <property type="term" value="F:zinc ion binding"/>
    <property type="evidence" value="ECO:0007669"/>
    <property type="project" value="UniProtKB-UniRule"/>
</dbReference>
<dbReference type="GO" id="GO:0051085">
    <property type="term" value="P:chaperone cofactor-dependent protein refolding"/>
    <property type="evidence" value="ECO:0007669"/>
    <property type="project" value="TreeGrafter"/>
</dbReference>
<dbReference type="GO" id="GO:0006260">
    <property type="term" value="P:DNA replication"/>
    <property type="evidence" value="ECO:0007669"/>
    <property type="project" value="UniProtKB-KW"/>
</dbReference>
<dbReference type="GO" id="GO:0042026">
    <property type="term" value="P:protein refolding"/>
    <property type="evidence" value="ECO:0007669"/>
    <property type="project" value="TreeGrafter"/>
</dbReference>
<dbReference type="GO" id="GO:0009408">
    <property type="term" value="P:response to heat"/>
    <property type="evidence" value="ECO:0007669"/>
    <property type="project" value="InterPro"/>
</dbReference>
<dbReference type="CDD" id="cd06257">
    <property type="entry name" value="DnaJ"/>
    <property type="match status" value="1"/>
</dbReference>
<dbReference type="CDD" id="cd10747">
    <property type="entry name" value="DnaJ_C"/>
    <property type="match status" value="1"/>
</dbReference>
<dbReference type="CDD" id="cd10719">
    <property type="entry name" value="DnaJ_zf"/>
    <property type="match status" value="1"/>
</dbReference>
<dbReference type="FunFam" id="1.10.287.110:FF:000051">
    <property type="entry name" value="Molecular chaperone DnaJ"/>
    <property type="match status" value="1"/>
</dbReference>
<dbReference type="FunFam" id="2.10.230.10:FF:000002">
    <property type="entry name" value="Molecular chaperone DnaJ"/>
    <property type="match status" value="1"/>
</dbReference>
<dbReference type="FunFam" id="2.60.260.20:FF:000004">
    <property type="entry name" value="Molecular chaperone DnaJ"/>
    <property type="match status" value="1"/>
</dbReference>
<dbReference type="Gene3D" id="1.10.287.110">
    <property type="entry name" value="DnaJ domain"/>
    <property type="match status" value="1"/>
</dbReference>
<dbReference type="Gene3D" id="2.10.230.10">
    <property type="entry name" value="Heat shock protein DnaJ, cysteine-rich domain"/>
    <property type="match status" value="1"/>
</dbReference>
<dbReference type="Gene3D" id="2.60.260.20">
    <property type="entry name" value="Urease metallochaperone UreE, N-terminal domain"/>
    <property type="match status" value="2"/>
</dbReference>
<dbReference type="HAMAP" id="MF_01152">
    <property type="entry name" value="DnaJ"/>
    <property type="match status" value="1"/>
</dbReference>
<dbReference type="InterPro" id="IPR012724">
    <property type="entry name" value="DnaJ"/>
</dbReference>
<dbReference type="InterPro" id="IPR002939">
    <property type="entry name" value="DnaJ_C"/>
</dbReference>
<dbReference type="InterPro" id="IPR001623">
    <property type="entry name" value="DnaJ_domain"/>
</dbReference>
<dbReference type="InterPro" id="IPR018253">
    <property type="entry name" value="DnaJ_domain_CS"/>
</dbReference>
<dbReference type="InterPro" id="IPR008971">
    <property type="entry name" value="HSP40/DnaJ_pept-bd"/>
</dbReference>
<dbReference type="InterPro" id="IPR001305">
    <property type="entry name" value="HSP_DnaJ_Cys-rich_dom"/>
</dbReference>
<dbReference type="InterPro" id="IPR036410">
    <property type="entry name" value="HSP_DnaJ_Cys-rich_dom_sf"/>
</dbReference>
<dbReference type="InterPro" id="IPR036869">
    <property type="entry name" value="J_dom_sf"/>
</dbReference>
<dbReference type="NCBIfam" id="TIGR02349">
    <property type="entry name" value="DnaJ_bact"/>
    <property type="match status" value="1"/>
</dbReference>
<dbReference type="NCBIfam" id="NF008035">
    <property type="entry name" value="PRK10767.1"/>
    <property type="match status" value="1"/>
</dbReference>
<dbReference type="PANTHER" id="PTHR43096:SF48">
    <property type="entry name" value="CHAPERONE PROTEIN DNAJ"/>
    <property type="match status" value="1"/>
</dbReference>
<dbReference type="PANTHER" id="PTHR43096">
    <property type="entry name" value="DNAJ HOMOLOG 1, MITOCHONDRIAL-RELATED"/>
    <property type="match status" value="1"/>
</dbReference>
<dbReference type="Pfam" id="PF00226">
    <property type="entry name" value="DnaJ"/>
    <property type="match status" value="1"/>
</dbReference>
<dbReference type="Pfam" id="PF01556">
    <property type="entry name" value="DnaJ_C"/>
    <property type="match status" value="1"/>
</dbReference>
<dbReference type="Pfam" id="PF00684">
    <property type="entry name" value="DnaJ_CXXCXGXG"/>
    <property type="match status" value="1"/>
</dbReference>
<dbReference type="PRINTS" id="PR00625">
    <property type="entry name" value="JDOMAIN"/>
</dbReference>
<dbReference type="SMART" id="SM00271">
    <property type="entry name" value="DnaJ"/>
    <property type="match status" value="1"/>
</dbReference>
<dbReference type="SUPFAM" id="SSF46565">
    <property type="entry name" value="Chaperone J-domain"/>
    <property type="match status" value="1"/>
</dbReference>
<dbReference type="SUPFAM" id="SSF57938">
    <property type="entry name" value="DnaJ/Hsp40 cysteine-rich domain"/>
    <property type="match status" value="1"/>
</dbReference>
<dbReference type="SUPFAM" id="SSF49493">
    <property type="entry name" value="HSP40/DnaJ peptide-binding domain"/>
    <property type="match status" value="2"/>
</dbReference>
<dbReference type="PROSITE" id="PS00636">
    <property type="entry name" value="DNAJ_1"/>
    <property type="match status" value="1"/>
</dbReference>
<dbReference type="PROSITE" id="PS50076">
    <property type="entry name" value="DNAJ_2"/>
    <property type="match status" value="1"/>
</dbReference>
<dbReference type="PROSITE" id="PS51188">
    <property type="entry name" value="ZF_CR"/>
    <property type="match status" value="1"/>
</dbReference>